<reference key="1">
    <citation type="journal article" date="2000" name="Arch. Virol.">
        <title>Evidence of genetic diversity generated by recombination among avian coronavirus IBV.</title>
        <authorList>
            <person name="Lee C.-W."/>
            <person name="Jackwood M.W."/>
        </authorList>
    </citation>
    <scope>NUCLEOTIDE SEQUENCE [GENOMIC RNA]</scope>
    <source>
        <strain>Isolate AR/6386/97</strain>
        <strain>Isolate GA/5381/99</strain>
        <strain>Isolate GA/5658/99</strain>
        <strain>Isolate IL/2831/98</strain>
        <strain>Isolate KS/5425/99</strain>
        <strain>Isolate MN/6370/97</strain>
    </source>
</reference>
<gene>
    <name evidence="1" type="primary">M</name>
</gene>
<organismHost>
    <name type="scientific">Gallus gallus</name>
    <name type="common">Chicken</name>
    <dbReference type="NCBI Taxonomy" id="9031"/>
</organismHost>
<keyword id="KW-0325">Glycoprotein</keyword>
<keyword id="KW-1040">Host Golgi apparatus</keyword>
<keyword id="KW-1043">Host membrane</keyword>
<keyword id="KW-0472">Membrane</keyword>
<keyword id="KW-0812">Transmembrane</keyword>
<keyword id="KW-1133">Transmembrane helix</keyword>
<keyword id="KW-0261">Viral envelope protein</keyword>
<keyword id="KW-0468">Viral matrix protein</keyword>
<keyword id="KW-0946">Virion</keyword>
<protein>
    <recommendedName>
        <fullName evidence="1">Membrane protein</fullName>
        <shortName evidence="1">M protein</shortName>
    </recommendedName>
    <alternativeName>
        <fullName evidence="1">E1 glycoprotein</fullName>
    </alternativeName>
    <alternativeName>
        <fullName evidence="1">Matrix glycoprotein</fullName>
    </alternativeName>
    <alternativeName>
        <fullName evidence="1">Membrane glycoprotein</fullName>
    </alternativeName>
</protein>
<accession>Q9J3N8</accession>
<accession>Q9J3N9</accession>
<accession>Q9J3P0</accession>
<accession>Q9J3P1</accession>
<accession>Q9J3P2</accession>
<accession>Q9J3P3</accession>
<accession>Q9J4B3</accession>
<dbReference type="EMBL" id="AF202999">
    <property type="protein sequence ID" value="AAF69113.1"/>
    <property type="molecule type" value="Genomic_RNA"/>
</dbReference>
<dbReference type="EMBL" id="AF206266">
    <property type="protein sequence ID" value="AAF67556.1"/>
    <property type="molecule type" value="Genomic_RNA"/>
</dbReference>
<dbReference type="EMBL" id="AF206267">
    <property type="protein sequence ID" value="AAF67557.1"/>
    <property type="molecule type" value="Genomic_RNA"/>
</dbReference>
<dbReference type="EMBL" id="AF206268">
    <property type="protein sequence ID" value="AAF67558.1"/>
    <property type="molecule type" value="Genomic_RNA"/>
</dbReference>
<dbReference type="EMBL" id="AF206269">
    <property type="protein sequence ID" value="AAF67559.1"/>
    <property type="molecule type" value="Genomic_RNA"/>
</dbReference>
<dbReference type="EMBL" id="AF206270">
    <property type="protein sequence ID" value="AAF67560.1"/>
    <property type="molecule type" value="Genomic_RNA"/>
</dbReference>
<dbReference type="EMBL" id="AF206271">
    <property type="protein sequence ID" value="AAF67561.1"/>
    <property type="molecule type" value="Genomic_RNA"/>
</dbReference>
<dbReference type="SMR" id="Q9J3N8"/>
<dbReference type="TCDB" id="1.A.117.1.7">
    <property type="family name" value="the coronavirus membrane matrix-protein (m-protein) family"/>
</dbReference>
<dbReference type="GO" id="GO:0044178">
    <property type="term" value="C:host cell Golgi membrane"/>
    <property type="evidence" value="ECO:0007669"/>
    <property type="project" value="UniProtKB-SubCell"/>
</dbReference>
<dbReference type="GO" id="GO:0016020">
    <property type="term" value="C:membrane"/>
    <property type="evidence" value="ECO:0007669"/>
    <property type="project" value="UniProtKB-UniRule"/>
</dbReference>
<dbReference type="GO" id="GO:0019031">
    <property type="term" value="C:viral envelope"/>
    <property type="evidence" value="ECO:0007669"/>
    <property type="project" value="UniProtKB-UniRule"/>
</dbReference>
<dbReference type="GO" id="GO:0055036">
    <property type="term" value="C:virion membrane"/>
    <property type="evidence" value="ECO:0007669"/>
    <property type="project" value="UniProtKB-SubCell"/>
</dbReference>
<dbReference type="GO" id="GO:0039660">
    <property type="term" value="F:structural constituent of virion"/>
    <property type="evidence" value="ECO:0007669"/>
    <property type="project" value="UniProtKB-UniRule"/>
</dbReference>
<dbReference type="CDD" id="cd21566">
    <property type="entry name" value="gammaCoV_M"/>
    <property type="match status" value="1"/>
</dbReference>
<dbReference type="HAMAP" id="MF_04203">
    <property type="entry name" value="GAMMA_CORONA_M"/>
    <property type="match status" value="1"/>
</dbReference>
<dbReference type="InterPro" id="IPR042550">
    <property type="entry name" value="GAMMA_CORONA_M"/>
</dbReference>
<dbReference type="InterPro" id="IPR002574">
    <property type="entry name" value="M_CoV"/>
</dbReference>
<dbReference type="Pfam" id="PF01635">
    <property type="entry name" value="CoV_M"/>
    <property type="match status" value="1"/>
</dbReference>
<dbReference type="PROSITE" id="PS51927">
    <property type="entry name" value="COV_M"/>
    <property type="match status" value="1"/>
</dbReference>
<sequence>MSNETNCTLDFEQSVELFKEYNLFITAFLLFLTIILQYGYATRSKFIYILKMIVLWCFWPLNIAVGVISCIYPPNTGGLVAAIILTVFACLSFVGYWIQSIRLFKRCRSWWSFNPESNAVGSILLTNGQQCNFAIESVPTVLSPIIKNGFLYCEGQWLAKCEPDHLPKDIFVCTPDRRNIYRMVQKYTGDQSGNKKRFATFVYAKQSVDTGELESVATGGSSLYT</sequence>
<organism>
    <name type="scientific">Avian infectious bronchitis virus (strain DE072)</name>
    <name type="common">IBV</name>
    <dbReference type="NCBI Taxonomy" id="233265"/>
    <lineage>
        <taxon>Viruses</taxon>
        <taxon>Riboviria</taxon>
        <taxon>Orthornavirae</taxon>
        <taxon>Pisuviricota</taxon>
        <taxon>Pisoniviricetes</taxon>
        <taxon>Nidovirales</taxon>
        <taxon>Cornidovirineae</taxon>
        <taxon>Coronaviridae</taxon>
        <taxon>Orthocoronavirinae</taxon>
        <taxon>Gammacoronavirus</taxon>
        <taxon>Igacovirus</taxon>
        <taxon>Avian coronavirus</taxon>
    </lineage>
</organism>
<proteinExistence type="inferred from homology"/>
<evidence type="ECO:0000255" key="1">
    <source>
        <dbReference type="HAMAP-Rule" id="MF_04203"/>
    </source>
</evidence>
<evidence type="ECO:0000255" key="2">
    <source>
        <dbReference type="PROSITE-ProRule" id="PRU01275"/>
    </source>
</evidence>
<feature type="chain" id="PRO_0000106054" description="Membrane protein">
    <location>
        <begin position="1"/>
        <end position="225"/>
    </location>
</feature>
<feature type="topological domain" description="Virion surface" evidence="1">
    <location>
        <begin position="1"/>
        <end position="20"/>
    </location>
</feature>
<feature type="transmembrane region" description="Helical" evidence="1">
    <location>
        <begin position="21"/>
        <end position="41"/>
    </location>
</feature>
<feature type="topological domain" description="Intravirion" evidence="1">
    <location>
        <begin position="42"/>
        <end position="51"/>
    </location>
</feature>
<feature type="transmembrane region" description="Helical" evidence="1">
    <location>
        <begin position="52"/>
        <end position="72"/>
    </location>
</feature>
<feature type="topological domain" description="Virion surface" evidence="1">
    <location>
        <begin position="73"/>
        <end position="77"/>
    </location>
</feature>
<feature type="transmembrane region" description="Helical" evidence="1">
    <location>
        <begin position="78"/>
        <end position="98"/>
    </location>
</feature>
<feature type="topological domain" description="Intravirion" evidence="1">
    <location>
        <begin position="99"/>
        <end position="225"/>
    </location>
</feature>
<feature type="sequence variant" description="In strain: Isolate MN/6370/97.">
    <original>SNE</original>
    <variation>DNV</variation>
    <location>
        <begin position="2"/>
        <end position="4"/>
    </location>
</feature>
<feature type="sequence variant" description="In strain: Isolate AR/6386/97.">
    <original>S</original>
    <variation>A</variation>
    <location>
        <position position="2"/>
    </location>
</feature>
<feature type="sequence variant" description="In strain: Isolate MN/6370/97.">
    <original>FE</original>
    <variation>LQ</variation>
    <location>
        <begin position="11"/>
        <end position="12"/>
    </location>
</feature>
<feature type="sequence variant" description="In strain: Isolate MN/6370/97.">
    <original>VE</original>
    <variation>IL</variation>
    <location>
        <begin position="15"/>
        <end position="16"/>
    </location>
</feature>
<feature type="sequence variant" description="In strain: Isolate IL/2831/98.">
    <original>E</original>
    <variation>K</variation>
    <location>
        <position position="16"/>
    </location>
</feature>
<feature type="sequence variant" description="In strain: Isolate AR/6386/97.">
    <original>L</original>
    <variation>F</variation>
    <location>
        <position position="17"/>
    </location>
</feature>
<feature type="sequence variant" description="In strain: Isolate GA/5381/99.">
    <original>I</original>
    <variation>M</variation>
    <location>
        <position position="34"/>
    </location>
</feature>
<feature type="sequence variant" description="In strain: Isolate IL/2831/98 and Isolate MN/6370/97.">
    <original>I</original>
    <variation>L</variation>
    <location>
        <position position="35"/>
    </location>
</feature>
<feature type="sequence variant" description="In strain: Isolate IL/2831/98.">
    <original>SKFIYI</original>
    <variation>NRLIYA</variation>
    <location>
        <begin position="44"/>
        <end position="49"/>
    </location>
</feature>
<feature type="sequence variant" description="In strain: Isolate AR/6386/97.">
    <original>S</original>
    <variation>I</variation>
    <location>
        <position position="44"/>
    </location>
</feature>
<feature type="sequence variant" description="In strain: Isolate MN/6370/97.">
    <original>K</original>
    <variation>R</variation>
    <location>
        <position position="45"/>
    </location>
</feature>
<feature type="sequence variant" description="In strain: Isolate GA/5381/99.">
    <original>F</original>
    <variation>I</variation>
    <location>
        <position position="46"/>
    </location>
</feature>
<feature type="sequence variant" description="In strain: Isolate MN/6370/97.">
    <original>IL</original>
    <variation>VM</variation>
    <location>
        <begin position="49"/>
        <end position="50"/>
    </location>
</feature>
<feature type="sequence variant" description="In strain: Isolate AR/6386/97, Isolate GA/5381/99, Isolate GA/5658/99 and Isolate KS/5425/99.">
    <original>I</original>
    <variation>V</variation>
    <location>
        <position position="53"/>
    </location>
</feature>
<feature type="sequence variant" description="In strain: Isolate KS/5425/99.">
    <original>N</original>
    <variation>I</variation>
    <location>
        <position position="62"/>
    </location>
</feature>
<feature type="sequence variant" description="In strain: Isolate GA/5381/99.">
    <original>T</original>
    <variation>I</variation>
    <location>
        <position position="76"/>
    </location>
</feature>
<feature type="sequence variant" description="In strain: Isolate IL/2831/98.">
    <original>I</original>
    <variation>C</variation>
    <location>
        <position position="101"/>
    </location>
</feature>
<feature type="sequence variant" description="In strain: Isolate IL/2831/98.">
    <original>R</original>
    <variation>K</variation>
    <location>
        <position position="108"/>
    </location>
</feature>
<feature type="sequence variant" description="In strain: Isolate MN/6370/97.">
    <original>S</original>
    <variation>A</variation>
    <location>
        <position position="112"/>
    </location>
</feature>
<feature type="sequence variant" description="In strain: Isolate MN/6370/97.">
    <original>N</original>
    <variation>S</variation>
    <location>
        <position position="132"/>
    </location>
</feature>
<feature type="sequence variant" description="In strain: Isolate AR/6386/97, Isolate IL/2831/98, Isolate GA/5381/99, Isolate GA/5658/99, Isolate KS/5425/99 and Isolate MN/6370/97.">
    <original>T</original>
    <variation>M</variation>
    <location>
        <position position="140"/>
    </location>
</feature>
<feature type="sequence variant" description="In strain: Isolate GA/5381/99.">
    <original>F</original>
    <variation>A</variation>
    <location>
        <position position="150"/>
    </location>
</feature>
<feature type="sequence variant" description="In strain: Isolate AR/6386/97, Isolate GA/5658/99, Isolate IL/2831/98, Isolate KS/5425/99 and Isolate MN/6370/97.">
    <original>F</original>
    <variation>V</variation>
    <location>
        <position position="150"/>
    </location>
</feature>
<feature type="sequence variant" description="In strain: Isolate IL/2831/98.">
    <original>I</original>
    <variation>T</variation>
    <location>
        <position position="180"/>
    </location>
</feature>
<comment type="function">
    <text evidence="1 2">Component of the viral envelope that plays a central role in virus morphogenesis and assembly via its interactions with other viral proteins.</text>
</comment>
<comment type="subunit">
    <text evidence="1 2">Homomultimer. Interacts with envelope E protein in the budding compartment of the host cell, which is located between endoplasmic reticulum and the Golgi complex. Forms a complex with HE and S proteins. Interacts with nucleocapsid N protein. This interaction probably participates in RNA packaging into the virus.</text>
</comment>
<comment type="subcellular location">
    <subcellularLocation>
        <location evidence="1">Virion membrane</location>
        <topology evidence="1">Multi-pass membrane protein</topology>
    </subcellularLocation>
    <subcellularLocation>
        <location evidence="1">Host Golgi apparatus membrane</location>
        <topology evidence="1">Multi-pass membrane protein</topology>
    </subcellularLocation>
    <text evidence="1">Largely embedded in the lipid bilayer.</text>
</comment>
<comment type="similarity">
    <text evidence="1">Belongs to the gammacoronaviruses M protein family.</text>
</comment>
<name>VME1_IBVDE</name>